<gene>
    <name evidence="1" type="primary">murD</name>
    <name type="ordered locus">Spy49_1177c</name>
</gene>
<keyword id="KW-0067">ATP-binding</keyword>
<keyword id="KW-0131">Cell cycle</keyword>
<keyword id="KW-0132">Cell division</keyword>
<keyword id="KW-0133">Cell shape</keyword>
<keyword id="KW-0961">Cell wall biogenesis/degradation</keyword>
<keyword id="KW-0963">Cytoplasm</keyword>
<keyword id="KW-0436">Ligase</keyword>
<keyword id="KW-0547">Nucleotide-binding</keyword>
<keyword id="KW-0573">Peptidoglycan synthesis</keyword>
<name>MURD_STRPZ</name>
<comment type="function">
    <text evidence="1">Cell wall formation. Catalyzes the addition of glutamate to the nucleotide precursor UDP-N-acetylmuramoyl-L-alanine (UMA).</text>
</comment>
<comment type="catalytic activity">
    <reaction evidence="1">
        <text>UDP-N-acetyl-alpha-D-muramoyl-L-alanine + D-glutamate + ATP = UDP-N-acetyl-alpha-D-muramoyl-L-alanyl-D-glutamate + ADP + phosphate + H(+)</text>
        <dbReference type="Rhea" id="RHEA:16429"/>
        <dbReference type="ChEBI" id="CHEBI:15378"/>
        <dbReference type="ChEBI" id="CHEBI:29986"/>
        <dbReference type="ChEBI" id="CHEBI:30616"/>
        <dbReference type="ChEBI" id="CHEBI:43474"/>
        <dbReference type="ChEBI" id="CHEBI:83898"/>
        <dbReference type="ChEBI" id="CHEBI:83900"/>
        <dbReference type="ChEBI" id="CHEBI:456216"/>
        <dbReference type="EC" id="6.3.2.9"/>
    </reaction>
</comment>
<comment type="pathway">
    <text evidence="1">Cell wall biogenesis; peptidoglycan biosynthesis.</text>
</comment>
<comment type="subcellular location">
    <subcellularLocation>
        <location evidence="1">Cytoplasm</location>
    </subcellularLocation>
</comment>
<comment type="similarity">
    <text evidence="1">Belongs to the MurCDEF family.</text>
</comment>
<dbReference type="EC" id="6.3.2.9" evidence="1"/>
<dbReference type="EMBL" id="CP000829">
    <property type="protein sequence ID" value="ACI61465.1"/>
    <property type="molecule type" value="Genomic_DNA"/>
</dbReference>
<dbReference type="SMR" id="B5XMA3"/>
<dbReference type="KEGG" id="soz:Spy49_1177c"/>
<dbReference type="HOGENOM" id="CLU_032540_0_1_9"/>
<dbReference type="UniPathway" id="UPA00219"/>
<dbReference type="Proteomes" id="UP000001039">
    <property type="component" value="Chromosome"/>
</dbReference>
<dbReference type="GO" id="GO:0005737">
    <property type="term" value="C:cytoplasm"/>
    <property type="evidence" value="ECO:0007669"/>
    <property type="project" value="UniProtKB-SubCell"/>
</dbReference>
<dbReference type="GO" id="GO:0005524">
    <property type="term" value="F:ATP binding"/>
    <property type="evidence" value="ECO:0007669"/>
    <property type="project" value="UniProtKB-UniRule"/>
</dbReference>
<dbReference type="GO" id="GO:0008764">
    <property type="term" value="F:UDP-N-acetylmuramoylalanine-D-glutamate ligase activity"/>
    <property type="evidence" value="ECO:0007669"/>
    <property type="project" value="UniProtKB-UniRule"/>
</dbReference>
<dbReference type="GO" id="GO:0051301">
    <property type="term" value="P:cell division"/>
    <property type="evidence" value="ECO:0007669"/>
    <property type="project" value="UniProtKB-KW"/>
</dbReference>
<dbReference type="GO" id="GO:0071555">
    <property type="term" value="P:cell wall organization"/>
    <property type="evidence" value="ECO:0007669"/>
    <property type="project" value="UniProtKB-KW"/>
</dbReference>
<dbReference type="GO" id="GO:0009252">
    <property type="term" value="P:peptidoglycan biosynthetic process"/>
    <property type="evidence" value="ECO:0007669"/>
    <property type="project" value="UniProtKB-UniRule"/>
</dbReference>
<dbReference type="GO" id="GO:0008360">
    <property type="term" value="P:regulation of cell shape"/>
    <property type="evidence" value="ECO:0007669"/>
    <property type="project" value="UniProtKB-KW"/>
</dbReference>
<dbReference type="Gene3D" id="3.90.190.20">
    <property type="entry name" value="Mur ligase, C-terminal domain"/>
    <property type="match status" value="1"/>
</dbReference>
<dbReference type="Gene3D" id="3.40.1190.10">
    <property type="entry name" value="Mur-like, catalytic domain"/>
    <property type="match status" value="1"/>
</dbReference>
<dbReference type="Gene3D" id="3.40.50.720">
    <property type="entry name" value="NAD(P)-binding Rossmann-like Domain"/>
    <property type="match status" value="1"/>
</dbReference>
<dbReference type="HAMAP" id="MF_00639">
    <property type="entry name" value="MurD"/>
    <property type="match status" value="1"/>
</dbReference>
<dbReference type="InterPro" id="IPR036565">
    <property type="entry name" value="Mur-like_cat_sf"/>
</dbReference>
<dbReference type="InterPro" id="IPR004101">
    <property type="entry name" value="Mur_ligase_C"/>
</dbReference>
<dbReference type="InterPro" id="IPR036615">
    <property type="entry name" value="Mur_ligase_C_dom_sf"/>
</dbReference>
<dbReference type="InterPro" id="IPR013221">
    <property type="entry name" value="Mur_ligase_cen"/>
</dbReference>
<dbReference type="InterPro" id="IPR005762">
    <property type="entry name" value="MurD"/>
</dbReference>
<dbReference type="NCBIfam" id="TIGR01087">
    <property type="entry name" value="murD"/>
    <property type="match status" value="1"/>
</dbReference>
<dbReference type="PANTHER" id="PTHR43692">
    <property type="entry name" value="UDP-N-ACETYLMURAMOYLALANINE--D-GLUTAMATE LIGASE"/>
    <property type="match status" value="1"/>
</dbReference>
<dbReference type="PANTHER" id="PTHR43692:SF1">
    <property type="entry name" value="UDP-N-ACETYLMURAMOYLALANINE--D-GLUTAMATE LIGASE"/>
    <property type="match status" value="1"/>
</dbReference>
<dbReference type="Pfam" id="PF02875">
    <property type="entry name" value="Mur_ligase_C"/>
    <property type="match status" value="1"/>
</dbReference>
<dbReference type="Pfam" id="PF08245">
    <property type="entry name" value="Mur_ligase_M"/>
    <property type="match status" value="1"/>
</dbReference>
<dbReference type="Pfam" id="PF21799">
    <property type="entry name" value="MurD-like_N"/>
    <property type="match status" value="1"/>
</dbReference>
<dbReference type="SUPFAM" id="SSF51984">
    <property type="entry name" value="MurCD N-terminal domain"/>
    <property type="match status" value="1"/>
</dbReference>
<dbReference type="SUPFAM" id="SSF53623">
    <property type="entry name" value="MurD-like peptide ligases, catalytic domain"/>
    <property type="match status" value="1"/>
</dbReference>
<dbReference type="SUPFAM" id="SSF53244">
    <property type="entry name" value="MurD-like peptide ligases, peptide-binding domain"/>
    <property type="match status" value="1"/>
</dbReference>
<accession>B5XMA3</accession>
<reference key="1">
    <citation type="journal article" date="2008" name="J. Bacteriol.">
        <title>Genome sequence of a nephritogenic and highly transformable M49 strain of Streptococcus pyogenes.</title>
        <authorList>
            <person name="McShan W.M."/>
            <person name="Ferretti J.J."/>
            <person name="Karasawa T."/>
            <person name="Suvorov A.N."/>
            <person name="Lin S."/>
            <person name="Qin B."/>
            <person name="Jia H."/>
            <person name="Kenton S."/>
            <person name="Najar F."/>
            <person name="Wu H."/>
            <person name="Scott J."/>
            <person name="Roe B.A."/>
            <person name="Savic D.J."/>
        </authorList>
    </citation>
    <scope>NUCLEOTIDE SEQUENCE [LARGE SCALE GENOMIC DNA]</scope>
    <source>
        <strain>NZ131</strain>
    </source>
</reference>
<proteinExistence type="inferred from homology"/>
<feature type="chain" id="PRO_1000130877" description="UDP-N-acetylmuramoylalanine--D-glutamate ligase">
    <location>
        <begin position="1"/>
        <end position="452"/>
    </location>
</feature>
<feature type="binding site" evidence="1">
    <location>
        <begin position="119"/>
        <end position="125"/>
    </location>
    <ligand>
        <name>ATP</name>
        <dbReference type="ChEBI" id="CHEBI:30616"/>
    </ligand>
</feature>
<evidence type="ECO:0000255" key="1">
    <source>
        <dbReference type="HAMAP-Rule" id="MF_00639"/>
    </source>
</evidence>
<protein>
    <recommendedName>
        <fullName evidence="1">UDP-N-acetylmuramoylalanine--D-glutamate ligase</fullName>
        <ecNumber evidence="1">6.3.2.9</ecNumber>
    </recommendedName>
    <alternativeName>
        <fullName evidence="1">D-glutamic acid-adding enzyme</fullName>
    </alternativeName>
    <alternativeName>
        <fullName evidence="1">UDP-N-acetylmuramoyl-L-alanyl-D-glutamate synthetase</fullName>
    </alternativeName>
</protein>
<sequence length="452" mass="48728">MKVISNFQNKKILILGLAKSGEAAAKLLTKLGALVTVNDSKPFDQNPAAQALLEEGIKVICGSHPVELLDEDFEYMVKNPGIPYDNPMVKRALAKEIPILTEVELAYFVSEAPIIGITGSNGKTTTTTMIADVLNAGGQSALLSGNIGYPASKVVQKAIAGDTLVMELSSFQLVGVNAFRPHIAVITNLMPTHLDYHGSFEDYVAAKWMIQAQMTESDYLILNANQEISATLAKTTKATVIPFSTQKVVDGAYLKDGILYFKEQAIIAATDLGVPGSHNIENALATIAVAKLSGIADDIIAQCLSHFGGVKHRLQRVGQIKDITFYNDSKSTNILATQKALSGFDNSRLILIAGGLDRGNEFDDLVPDLLGLKQMIILGESAERMKRAANKAEVSYLEARNVAEATELAFKLAQTGDTILLSPANASWDMYPNFEVRGDEFLATFDCLRGDA</sequence>
<organism>
    <name type="scientific">Streptococcus pyogenes serotype M49 (strain NZ131)</name>
    <dbReference type="NCBI Taxonomy" id="471876"/>
    <lineage>
        <taxon>Bacteria</taxon>
        <taxon>Bacillati</taxon>
        <taxon>Bacillota</taxon>
        <taxon>Bacilli</taxon>
        <taxon>Lactobacillales</taxon>
        <taxon>Streptococcaceae</taxon>
        <taxon>Streptococcus</taxon>
    </lineage>
</organism>